<keyword id="KW-0119">Carbohydrate metabolism</keyword>
<keyword id="KW-1015">Disulfide bond</keyword>
<keyword id="KW-0325">Glycoprotein</keyword>
<keyword id="KW-0326">Glycosidase</keyword>
<keyword id="KW-0378">Hydrolase</keyword>
<keyword id="KW-0624">Polysaccharide degradation</keyword>
<keyword id="KW-1185">Reference proteome</keyword>
<keyword id="KW-0732">Signal</keyword>
<name>AMYG_ASPOR</name>
<feature type="signal peptide" evidence="1">
    <location>
        <begin position="1"/>
        <end position="19"/>
    </location>
</feature>
<feature type="propeptide" id="PRO_0000001465" evidence="1">
    <location>
        <begin position="20"/>
        <end position="25"/>
    </location>
</feature>
<feature type="chain" id="PRO_0000001466" description="Glucoamylase">
    <location>
        <begin position="26"/>
        <end position="612"/>
    </location>
</feature>
<feature type="domain" description="CBM20" evidence="3">
    <location>
        <begin position="506"/>
        <end position="612"/>
    </location>
</feature>
<feature type="active site" description="Proton acceptor" evidence="4">
    <location>
        <position position="202"/>
    </location>
</feature>
<feature type="active site" description="Proton donor" evidence="4">
    <location>
        <position position="205"/>
    </location>
</feature>
<feature type="binding site" evidence="1">
    <location>
        <position position="146"/>
    </location>
    <ligand>
        <name>substrate</name>
    </ligand>
</feature>
<feature type="glycosylation site" description="N-linked (GlcNAc...) asparagine" evidence="2">
    <location>
        <position position="39"/>
    </location>
</feature>
<feature type="disulfide bond" evidence="1">
    <location>
        <begin position="236"/>
        <end position="239"/>
    </location>
</feature>
<feature type="disulfide bond" evidence="1">
    <location>
        <begin position="248"/>
        <end position="475"/>
    </location>
</feature>
<feature type="disulfide bond" evidence="1">
    <location>
        <begin position="288"/>
        <end position="296"/>
    </location>
</feature>
<feature type="sequence conflict" description="In Ref. 1; BAA00841 and 2; BAA01540." evidence="5" ref="1 2">
    <original>G</original>
    <variation>S</variation>
    <location>
        <position position="172"/>
    </location>
</feature>
<gene>
    <name type="primary">glaA</name>
    <name type="synonym">gluB</name>
    <name type="ORF">AO090010000746</name>
</gene>
<protein>
    <recommendedName>
        <fullName>Glucoamylase</fullName>
        <ecNumber>3.2.1.3</ecNumber>
    </recommendedName>
    <alternativeName>
        <fullName>1,4-alpha-D-glucan glucohydrolase</fullName>
    </alternativeName>
    <alternativeName>
        <fullName>Glucan 1,4-alpha-glucosidase</fullName>
    </alternativeName>
</protein>
<organism>
    <name type="scientific">Aspergillus oryzae (strain ATCC 42149 / RIB 40)</name>
    <name type="common">Yellow koji mold</name>
    <dbReference type="NCBI Taxonomy" id="510516"/>
    <lineage>
        <taxon>Eukaryota</taxon>
        <taxon>Fungi</taxon>
        <taxon>Dikarya</taxon>
        <taxon>Ascomycota</taxon>
        <taxon>Pezizomycotina</taxon>
        <taxon>Eurotiomycetes</taxon>
        <taxon>Eurotiomycetidae</taxon>
        <taxon>Eurotiales</taxon>
        <taxon>Aspergillaceae</taxon>
        <taxon>Aspergillus</taxon>
        <taxon>Aspergillus subgen. Circumdati</taxon>
    </lineage>
</organism>
<accession>P36914</accession>
<accession>Q3HLW7</accession>
<proteinExistence type="evidence at transcript level"/>
<comment type="catalytic activity">
    <reaction>
        <text>Hydrolysis of terminal (1-&gt;4)-linked alpha-D-glucose residues successively from non-reducing ends of the chains with release of beta-D-glucose.</text>
        <dbReference type="EC" id="3.2.1.3"/>
    </reaction>
</comment>
<comment type="similarity">
    <text evidence="5">Belongs to the glycosyl hydrolase 15 family.</text>
</comment>
<dbReference type="EC" id="3.2.1.3"/>
<dbReference type="EMBL" id="D01035">
    <property type="protein sequence ID" value="BAA00841.1"/>
    <property type="molecule type" value="mRNA"/>
</dbReference>
<dbReference type="EMBL" id="D10698">
    <property type="protein sequence ID" value="BAA01540.1"/>
    <property type="molecule type" value="Genomic_DNA"/>
</dbReference>
<dbReference type="EMBL" id="DQ211971">
    <property type="protein sequence ID" value="ABA62323.1"/>
    <property type="molecule type" value="mRNA"/>
</dbReference>
<dbReference type="EMBL" id="BA000056">
    <property type="protein sequence ID" value="BAE66563.1"/>
    <property type="molecule type" value="Genomic_DNA"/>
</dbReference>
<dbReference type="PIR" id="JQ1346">
    <property type="entry name" value="JQ1346"/>
</dbReference>
<dbReference type="RefSeq" id="XP_001827696.1">
    <property type="nucleotide sequence ID" value="XM_001827644.2"/>
</dbReference>
<dbReference type="SMR" id="P36914"/>
<dbReference type="STRING" id="510516.P36914"/>
<dbReference type="CAZy" id="CBM20">
    <property type="family name" value="Carbohydrate-Binding Module Family 20"/>
</dbReference>
<dbReference type="CAZy" id="GH15">
    <property type="family name" value="Glycoside Hydrolase Family 15"/>
</dbReference>
<dbReference type="GlyCosmos" id="P36914">
    <property type="glycosylation" value="1 site, No reported glycans"/>
</dbReference>
<dbReference type="EnsemblFungi" id="BAE66563">
    <property type="protein sequence ID" value="BAE66563"/>
    <property type="gene ID" value="AO090010000746"/>
</dbReference>
<dbReference type="GeneID" id="5999830"/>
<dbReference type="KEGG" id="aor:AO090010000746"/>
<dbReference type="VEuPathDB" id="FungiDB:AO090010000746"/>
<dbReference type="HOGENOM" id="CLU_012173_1_0_1"/>
<dbReference type="OMA" id="NRKYTVP"/>
<dbReference type="OrthoDB" id="20945at5052"/>
<dbReference type="BRENDA" id="3.2.1.3">
    <property type="organism ID" value="522"/>
</dbReference>
<dbReference type="Proteomes" id="UP000006564">
    <property type="component" value="Chromosome 8"/>
</dbReference>
<dbReference type="GO" id="GO:0000324">
    <property type="term" value="C:fungal-type vacuole"/>
    <property type="evidence" value="ECO:0007669"/>
    <property type="project" value="TreeGrafter"/>
</dbReference>
<dbReference type="GO" id="GO:0004339">
    <property type="term" value="F:glucan 1,4-alpha-glucosidase activity"/>
    <property type="evidence" value="ECO:0000315"/>
    <property type="project" value="AspGD"/>
</dbReference>
<dbReference type="GO" id="GO:2001070">
    <property type="term" value="F:starch binding"/>
    <property type="evidence" value="ECO:0007669"/>
    <property type="project" value="InterPro"/>
</dbReference>
<dbReference type="GO" id="GO:0000272">
    <property type="term" value="P:polysaccharide catabolic process"/>
    <property type="evidence" value="ECO:0007669"/>
    <property type="project" value="UniProtKB-KW"/>
</dbReference>
<dbReference type="CDD" id="cd05811">
    <property type="entry name" value="CBM20_glucoamylase"/>
    <property type="match status" value="1"/>
</dbReference>
<dbReference type="FunFam" id="1.50.10.10:FF:000018">
    <property type="entry name" value="Glucoamylase"/>
    <property type="match status" value="1"/>
</dbReference>
<dbReference type="FunFam" id="2.60.40.10:FF:000552">
    <property type="entry name" value="Related to glucoamylase"/>
    <property type="match status" value="1"/>
</dbReference>
<dbReference type="Gene3D" id="1.50.10.10">
    <property type="match status" value="1"/>
</dbReference>
<dbReference type="Gene3D" id="2.60.40.10">
    <property type="entry name" value="Immunoglobulins"/>
    <property type="match status" value="1"/>
</dbReference>
<dbReference type="InterPro" id="IPR008928">
    <property type="entry name" value="6-hairpin_glycosidase_sf"/>
</dbReference>
<dbReference type="InterPro" id="IPR012341">
    <property type="entry name" value="6hp_glycosidase-like_sf"/>
</dbReference>
<dbReference type="InterPro" id="IPR013784">
    <property type="entry name" value="Carb-bd-like_fold"/>
</dbReference>
<dbReference type="InterPro" id="IPR002044">
    <property type="entry name" value="CBM20"/>
</dbReference>
<dbReference type="InterPro" id="IPR034836">
    <property type="entry name" value="CBM20_glucoamylase"/>
</dbReference>
<dbReference type="InterPro" id="IPR011613">
    <property type="entry name" value="GH15-like"/>
</dbReference>
<dbReference type="InterPro" id="IPR000165">
    <property type="entry name" value="Glucoamylase"/>
</dbReference>
<dbReference type="InterPro" id="IPR046966">
    <property type="entry name" value="Glucoamylase_active_site"/>
</dbReference>
<dbReference type="InterPro" id="IPR008291">
    <property type="entry name" value="Glucoamylase_SBD"/>
</dbReference>
<dbReference type="InterPro" id="IPR013783">
    <property type="entry name" value="Ig-like_fold"/>
</dbReference>
<dbReference type="PANTHER" id="PTHR31616:SF12">
    <property type="entry name" value="GLUCOAMYLASE"/>
    <property type="match status" value="1"/>
</dbReference>
<dbReference type="PANTHER" id="PTHR31616">
    <property type="entry name" value="TREHALASE"/>
    <property type="match status" value="1"/>
</dbReference>
<dbReference type="Pfam" id="PF00686">
    <property type="entry name" value="CBM_20"/>
    <property type="match status" value="1"/>
</dbReference>
<dbReference type="Pfam" id="PF00723">
    <property type="entry name" value="Glyco_hydro_15"/>
    <property type="match status" value="1"/>
</dbReference>
<dbReference type="PIRSF" id="PIRSF001031">
    <property type="entry name" value="Glu-a-glcsd_SBD"/>
    <property type="match status" value="1"/>
</dbReference>
<dbReference type="PRINTS" id="PR00736">
    <property type="entry name" value="GLHYDRLASE15"/>
</dbReference>
<dbReference type="SMART" id="SM01065">
    <property type="entry name" value="CBM_2"/>
    <property type="match status" value="1"/>
</dbReference>
<dbReference type="SUPFAM" id="SSF48208">
    <property type="entry name" value="Six-hairpin glycosidases"/>
    <property type="match status" value="1"/>
</dbReference>
<dbReference type="SUPFAM" id="SSF49452">
    <property type="entry name" value="Starch-binding domain-like"/>
    <property type="match status" value="1"/>
</dbReference>
<dbReference type="PROSITE" id="PS51166">
    <property type="entry name" value="CBM20"/>
    <property type="match status" value="1"/>
</dbReference>
<dbReference type="PROSITE" id="PS00820">
    <property type="entry name" value="GLUCOAMYLASE"/>
    <property type="match status" value="1"/>
</dbReference>
<evidence type="ECO:0000250" key="1"/>
<evidence type="ECO:0000255" key="2"/>
<evidence type="ECO:0000255" key="3">
    <source>
        <dbReference type="PROSITE-ProRule" id="PRU00594"/>
    </source>
</evidence>
<evidence type="ECO:0000255" key="4">
    <source>
        <dbReference type="PROSITE-ProRule" id="PRU10051"/>
    </source>
</evidence>
<evidence type="ECO:0000305" key="5"/>
<sequence length="612" mass="65457">MVSFSSCLRALALGSSVLAVQPVLRQATGLDTWLSTEANFSRQAILNNIGADGQSAQGASPGVVIASPSKSDPDYFYTWTRDSGLVMKTLVDLFRGGDADLLPIIEEFISSQARIQGISNPSGALSSGGLGEPKFNVDETAFTGAWGRPQRDGPALRATAMISFGEWLVENGHTSIATDLVWPVVRNDLSYVAQYWSQSGFDLWEEVQGTSFFTVAVSHRALVEGSSFAKTVGSSCPYCDSQAPQVRCYLQSFWTGSYIQANFGGGRSGKDINTVLGSIHTFDPQATCDDATFQPCSARALANHKVVTDSFRSIYAINSGRAENQAVAVGRYPEDSYYNGNPWFLTTLAAAEQLYDALYQWDKIGSLAITDVSLPFFKALYSSAATGTYASSTTVYKDIVSAVKAYADGYVQIVQTYAASTGSMAEQYTKTDGSQTSARDLTWSYAALLTANNRRNAVVPAPWGETAATSIPSACSTTSASGTYSSVVITSWPTISGYPGAPDSPCQVPTTVSVTFAVKATTVYGESIKIVGSISQLGSWNPSSATALNADSYTTDNPLWTGTINLPAGQSFEYKFIRVQNGAVTWESDPNRKYTVPSTCGVKSAVQSDVWR</sequence>
<reference key="1">
    <citation type="journal article" date="1991" name="Agric. Biol. Chem.">
        <title>The glucoamylase cDNA from Aspergillus oryzae: its cloning, nucleotide sequence, and expression in Saccharomyces cerevisiae.</title>
        <authorList>
            <person name="Hata Y."/>
            <person name="Kitamoto K."/>
            <person name="Gomi K."/>
            <person name="Kumagai C."/>
            <person name="Tamura G."/>
            <person name="Hara S."/>
        </authorList>
    </citation>
    <scope>NUCLEOTIDE SEQUENCE [MRNA]</scope>
</reference>
<reference key="2">
    <citation type="journal article" date="1991" name="Gene">
        <title>Nucleotide sequence and expression of the glucoamylase-encoding gene (glaA) from Aspergillus oryzae.</title>
        <authorList>
            <person name="Hata Y."/>
            <person name="Tsuchiya K."/>
            <person name="Kitamoto K."/>
            <person name="Gomi K."/>
            <person name="Kumagai C."/>
            <person name="Tamura G."/>
            <person name="Hara S."/>
        </authorList>
    </citation>
    <scope>NUCLEOTIDE SEQUENCE [GENOMIC DNA]</scope>
    <source>
        <strain>ATCC 42149 / RIB 40</strain>
    </source>
</reference>
<reference key="3">
    <citation type="submission" date="2005-09" db="EMBL/GenBank/DDBJ databases">
        <authorList>
            <person name="Ma L."/>
            <person name="Chen D."/>
            <person name="Chen X."/>
            <person name="Wang H."/>
        </authorList>
    </citation>
    <scope>NUCLEOTIDE SEQUENCE [MRNA]</scope>
</reference>
<reference key="4">
    <citation type="journal article" date="2005" name="Nature">
        <title>Genome sequencing and analysis of Aspergillus oryzae.</title>
        <authorList>
            <person name="Machida M."/>
            <person name="Asai K."/>
            <person name="Sano M."/>
            <person name="Tanaka T."/>
            <person name="Kumagai T."/>
            <person name="Terai G."/>
            <person name="Kusumoto K."/>
            <person name="Arima T."/>
            <person name="Akita O."/>
            <person name="Kashiwagi Y."/>
            <person name="Abe K."/>
            <person name="Gomi K."/>
            <person name="Horiuchi H."/>
            <person name="Kitamoto K."/>
            <person name="Kobayashi T."/>
            <person name="Takeuchi M."/>
            <person name="Denning D.W."/>
            <person name="Galagan J.E."/>
            <person name="Nierman W.C."/>
            <person name="Yu J."/>
            <person name="Archer D.B."/>
            <person name="Bennett J.W."/>
            <person name="Bhatnagar D."/>
            <person name="Cleveland T.E."/>
            <person name="Fedorova N.D."/>
            <person name="Gotoh O."/>
            <person name="Horikawa H."/>
            <person name="Hosoyama A."/>
            <person name="Ichinomiya M."/>
            <person name="Igarashi R."/>
            <person name="Iwashita K."/>
            <person name="Juvvadi P.R."/>
            <person name="Kato M."/>
            <person name="Kato Y."/>
            <person name="Kin T."/>
            <person name="Kokubun A."/>
            <person name="Maeda H."/>
            <person name="Maeyama N."/>
            <person name="Maruyama J."/>
            <person name="Nagasaki H."/>
            <person name="Nakajima T."/>
            <person name="Oda K."/>
            <person name="Okada K."/>
            <person name="Paulsen I."/>
            <person name="Sakamoto K."/>
            <person name="Sawano T."/>
            <person name="Takahashi M."/>
            <person name="Takase K."/>
            <person name="Terabayashi Y."/>
            <person name="Wortman J.R."/>
            <person name="Yamada O."/>
            <person name="Yamagata Y."/>
            <person name="Anazawa H."/>
            <person name="Hata Y."/>
            <person name="Koide Y."/>
            <person name="Komori T."/>
            <person name="Koyama Y."/>
            <person name="Minetoki T."/>
            <person name="Suharnan S."/>
            <person name="Tanaka A."/>
            <person name="Isono K."/>
            <person name="Kuhara S."/>
            <person name="Ogasawara N."/>
            <person name="Kikuchi H."/>
        </authorList>
    </citation>
    <scope>NUCLEOTIDE SEQUENCE [LARGE SCALE GENOMIC DNA]</scope>
    <source>
        <strain>ATCC 42149 / RIB 40</strain>
    </source>
</reference>